<gene>
    <name type="primary">Stfa1</name>
    <name type="synonym">Stf-1</name>
    <name type="synonym">Stf1</name>
</gene>
<protein>
    <recommendedName>
        <fullName>Stefin-1</fullName>
    </recommendedName>
</protein>
<name>CYT1_MOUSE</name>
<evidence type="ECO:0000250" key="1"/>
<evidence type="ECO:0000305" key="2"/>
<feature type="chain" id="PRO_0000207148" description="Stefin-1">
    <location>
        <begin position="1"/>
        <end position="97"/>
    </location>
</feature>
<feature type="short sequence motif" description="Secondary area of contact">
    <location>
        <begin position="46"/>
        <end position="50"/>
    </location>
</feature>
<feature type="site" description="Reactive site" evidence="1">
    <location>
        <position position="4"/>
    </location>
</feature>
<reference key="1">
    <citation type="journal article" date="1993" name="Genomics">
        <title>Molecular characterization and mapping of murine genes encoding three members of the stefin family of cysteine proteinase inhibitors.</title>
        <authorList>
            <person name="Tsui F.W."/>
            <person name="Tsui H.W."/>
            <person name="Mok S."/>
            <person name="Mlinaric I."/>
            <person name="Copeland N.G."/>
            <person name="Gilbert D.J."/>
            <person name="Jenkins N.A."/>
            <person name="Siminovitch K.A."/>
        </authorList>
    </citation>
    <scope>NUCLEOTIDE SEQUENCE [MRNA]</scope>
    <source>
        <strain>C57BL/6J</strain>
        <tissue>Bone marrow</tissue>
    </source>
</reference>
<reference key="2">
    <citation type="journal article" date="2009" name="PLoS Biol.">
        <title>Lineage-specific biology revealed by a finished genome assembly of the mouse.</title>
        <authorList>
            <person name="Church D.M."/>
            <person name="Goodstadt L."/>
            <person name="Hillier L.W."/>
            <person name="Zody M.C."/>
            <person name="Goldstein S."/>
            <person name="She X."/>
            <person name="Bult C.J."/>
            <person name="Agarwala R."/>
            <person name="Cherry J.L."/>
            <person name="DiCuccio M."/>
            <person name="Hlavina W."/>
            <person name="Kapustin Y."/>
            <person name="Meric P."/>
            <person name="Maglott D."/>
            <person name="Birtle Z."/>
            <person name="Marques A.C."/>
            <person name="Graves T."/>
            <person name="Zhou S."/>
            <person name="Teague B."/>
            <person name="Potamousis K."/>
            <person name="Churas C."/>
            <person name="Place M."/>
            <person name="Herschleb J."/>
            <person name="Runnheim R."/>
            <person name="Forrest D."/>
            <person name="Amos-Landgraf J."/>
            <person name="Schwartz D.C."/>
            <person name="Cheng Z."/>
            <person name="Lindblad-Toh K."/>
            <person name="Eichler E.E."/>
            <person name="Ponting C.P."/>
        </authorList>
    </citation>
    <scope>NUCLEOTIDE SEQUENCE [LARGE SCALE GENOMIC DNA]</scope>
    <source>
        <strain>C57BL/6J</strain>
    </source>
</reference>
<keyword id="KW-0963">Cytoplasm</keyword>
<keyword id="KW-0646">Protease inhibitor</keyword>
<keyword id="KW-1185">Reference proteome</keyword>
<keyword id="KW-0789">Thiol protease inhibitor</keyword>
<dbReference type="EMBL" id="M92419">
    <property type="status" value="NOT_ANNOTATED_CDS"/>
    <property type="molecule type" value="mRNA"/>
</dbReference>
<dbReference type="EMBL" id="CT033776">
    <property type="status" value="NOT_ANNOTATED_CDS"/>
    <property type="molecule type" value="Genomic_DNA"/>
</dbReference>
<dbReference type="CCDS" id="CCDS37331.1"/>
<dbReference type="PIR" id="C46011">
    <property type="entry name" value="C46011"/>
</dbReference>
<dbReference type="RefSeq" id="NP_001076012.1">
    <property type="nucleotide sequence ID" value="NM_001082543.1"/>
</dbReference>
<dbReference type="SMR" id="P35175"/>
<dbReference type="FunCoup" id="P35175">
    <property type="interactions" value="75"/>
</dbReference>
<dbReference type="STRING" id="10090.ENSMUSP00000156337"/>
<dbReference type="MEROPS" id="I25.001"/>
<dbReference type="iPTMnet" id="P35175"/>
<dbReference type="PhosphoSitePlus" id="P35175"/>
<dbReference type="PaxDb" id="10090-ENSMUSP00000049068"/>
<dbReference type="ProteomicsDB" id="277950"/>
<dbReference type="Ensembl" id="ENSMUST00000232150.2">
    <property type="protein sequence ID" value="ENSMUSP00000156337.2"/>
    <property type="gene ID" value="ENSMUSG00000071562.7"/>
</dbReference>
<dbReference type="GeneID" id="20861"/>
<dbReference type="KEGG" id="mmu:20861"/>
<dbReference type="UCSC" id="uc007zck.1">
    <property type="organism name" value="mouse"/>
</dbReference>
<dbReference type="AGR" id="MGI:106198"/>
<dbReference type="CTD" id="20861"/>
<dbReference type="MGI" id="MGI:106198">
    <property type="gene designation" value="Stfa1"/>
</dbReference>
<dbReference type="VEuPathDB" id="HostDB:ENSMUSG00000071562"/>
<dbReference type="GeneTree" id="ENSGT00940000155717"/>
<dbReference type="HOGENOM" id="CLU_150234_2_1_1"/>
<dbReference type="InParanoid" id="P35175"/>
<dbReference type="OMA" id="MGEQQAS"/>
<dbReference type="PhylomeDB" id="P35175"/>
<dbReference type="TreeFam" id="TF333174"/>
<dbReference type="BioGRID-ORCS" id="20861">
    <property type="hits" value="1 hit in 45 CRISPR screens"/>
</dbReference>
<dbReference type="ChiTaRS" id="Stfa1">
    <property type="organism name" value="mouse"/>
</dbReference>
<dbReference type="PRO" id="PR:P35175"/>
<dbReference type="Proteomes" id="UP000000589">
    <property type="component" value="Chromosome 16"/>
</dbReference>
<dbReference type="RNAct" id="P35175">
    <property type="molecule type" value="protein"/>
</dbReference>
<dbReference type="Bgee" id="ENSMUSG00000071562">
    <property type="expression patterns" value="Expressed in granulocyte and 23 other cell types or tissues"/>
</dbReference>
<dbReference type="ExpressionAtlas" id="P35175">
    <property type="expression patterns" value="baseline and differential"/>
</dbReference>
<dbReference type="GO" id="GO:0005737">
    <property type="term" value="C:cytoplasm"/>
    <property type="evidence" value="ECO:0000314"/>
    <property type="project" value="MGI"/>
</dbReference>
<dbReference type="GO" id="GO:0004869">
    <property type="term" value="F:cysteine-type endopeptidase inhibitor activity"/>
    <property type="evidence" value="ECO:0007669"/>
    <property type="project" value="UniProtKB-KW"/>
</dbReference>
<dbReference type="GO" id="GO:0004866">
    <property type="term" value="F:endopeptidase inhibitor activity"/>
    <property type="evidence" value="ECO:0000314"/>
    <property type="project" value="MGI"/>
</dbReference>
<dbReference type="CDD" id="cd00042">
    <property type="entry name" value="CY"/>
    <property type="match status" value="1"/>
</dbReference>
<dbReference type="FunFam" id="3.10.450.10:FF:000001">
    <property type="entry name" value="Cystatin-A"/>
    <property type="match status" value="1"/>
</dbReference>
<dbReference type="Gene3D" id="3.10.450.10">
    <property type="match status" value="1"/>
</dbReference>
<dbReference type="InterPro" id="IPR000010">
    <property type="entry name" value="Cystatin_dom"/>
</dbReference>
<dbReference type="InterPro" id="IPR046350">
    <property type="entry name" value="Cystatin_sf"/>
</dbReference>
<dbReference type="InterPro" id="IPR018073">
    <property type="entry name" value="Prot_inh_cystat_CS"/>
</dbReference>
<dbReference type="InterPro" id="IPR001713">
    <property type="entry name" value="Prot_inh_stefin"/>
</dbReference>
<dbReference type="PANTHER" id="PTHR11414:SF16">
    <property type="entry name" value="CYSTATIN A FAMILY MEMBER 3-RELATED"/>
    <property type="match status" value="1"/>
</dbReference>
<dbReference type="PANTHER" id="PTHR11414">
    <property type="entry name" value="CYSTATIN FAMILY MEMBER"/>
    <property type="match status" value="1"/>
</dbReference>
<dbReference type="Pfam" id="PF00031">
    <property type="entry name" value="Cystatin"/>
    <property type="match status" value="1"/>
</dbReference>
<dbReference type="PRINTS" id="PR00295">
    <property type="entry name" value="STEFINA"/>
</dbReference>
<dbReference type="SMART" id="SM00043">
    <property type="entry name" value="CY"/>
    <property type="match status" value="1"/>
</dbReference>
<dbReference type="SUPFAM" id="SSF54403">
    <property type="entry name" value="Cystatin/monellin"/>
    <property type="match status" value="1"/>
</dbReference>
<dbReference type="PROSITE" id="PS00287">
    <property type="entry name" value="CYSTATIN"/>
    <property type="match status" value="1"/>
</dbReference>
<comment type="function">
    <text>This is an intracellular thiol proteinase inhibitor.</text>
</comment>
<comment type="subcellular location">
    <subcellularLocation>
        <location evidence="1">Cytoplasm</location>
    </subcellularLocation>
</comment>
<comment type="similarity">
    <text evidence="2">Belongs to the cystatin family.</text>
</comment>
<proteinExistence type="inferred from homology"/>
<accession>P35175</accession>
<sequence>MSLGGVSEASRATPEIQMIANKVRPQLEAKTNKKYEKFEAVEYKTQVVAGENIFIKMDVGHGCFIHIKVFNGPTGKDNYELHGYQTDKTMDEELTYF</sequence>
<organism>
    <name type="scientific">Mus musculus</name>
    <name type="common">Mouse</name>
    <dbReference type="NCBI Taxonomy" id="10090"/>
    <lineage>
        <taxon>Eukaryota</taxon>
        <taxon>Metazoa</taxon>
        <taxon>Chordata</taxon>
        <taxon>Craniata</taxon>
        <taxon>Vertebrata</taxon>
        <taxon>Euteleostomi</taxon>
        <taxon>Mammalia</taxon>
        <taxon>Eutheria</taxon>
        <taxon>Euarchontoglires</taxon>
        <taxon>Glires</taxon>
        <taxon>Rodentia</taxon>
        <taxon>Myomorpha</taxon>
        <taxon>Muroidea</taxon>
        <taxon>Muridae</taxon>
        <taxon>Murinae</taxon>
        <taxon>Mus</taxon>
        <taxon>Mus</taxon>
    </lineage>
</organism>